<feature type="chain" id="PRO_0000327674" description="Cyclic AMP receptor-like protein A">
    <location>
        <begin position="1"/>
        <end position="369"/>
    </location>
</feature>
<feature type="topological domain" description="Extracellular" evidence="1">
    <location>
        <begin position="1"/>
        <end position="4"/>
    </location>
</feature>
<feature type="transmembrane region" description="Helical; Name=1" evidence="1">
    <location>
        <begin position="5"/>
        <end position="22"/>
    </location>
</feature>
<feature type="topological domain" description="Cytoplasmic" evidence="1">
    <location>
        <begin position="23"/>
        <end position="72"/>
    </location>
</feature>
<feature type="transmembrane region" description="Helical; Name=2" evidence="1">
    <location>
        <begin position="73"/>
        <end position="93"/>
    </location>
</feature>
<feature type="topological domain" description="Extracellular" evidence="1">
    <location>
        <begin position="94"/>
        <end position="100"/>
    </location>
</feature>
<feature type="transmembrane region" description="Helical; Name=3" evidence="1">
    <location>
        <begin position="101"/>
        <end position="121"/>
    </location>
</feature>
<feature type="topological domain" description="Cytoplasmic" evidence="1">
    <location>
        <begin position="122"/>
        <end position="146"/>
    </location>
</feature>
<feature type="transmembrane region" description="Helical; Name=4" evidence="1">
    <location>
        <begin position="147"/>
        <end position="167"/>
    </location>
</feature>
<feature type="topological domain" description="Extracellular" evidence="1">
    <location>
        <begin position="168"/>
        <end position="173"/>
    </location>
</feature>
<feature type="transmembrane region" description="Helical; Name=5" evidence="1">
    <location>
        <begin position="174"/>
        <end position="194"/>
    </location>
</feature>
<feature type="topological domain" description="Cytoplasmic" evidence="1">
    <location>
        <begin position="195"/>
        <end position="212"/>
    </location>
</feature>
<feature type="transmembrane region" description="Helical; Name=6" evidence="1">
    <location>
        <begin position="213"/>
        <end position="233"/>
    </location>
</feature>
<feature type="topological domain" description="Extracellular" evidence="1">
    <location>
        <begin position="234"/>
        <end position="247"/>
    </location>
</feature>
<feature type="transmembrane region" description="Helical; Name=7" evidence="1">
    <location>
        <begin position="248"/>
        <end position="268"/>
    </location>
</feature>
<feature type="topological domain" description="Cytoplasmic" evidence="1">
    <location>
        <begin position="269"/>
        <end position="369"/>
    </location>
</feature>
<feature type="sequence conflict" description="In Ref. 1; AAO62367." evidence="3" ref="1">
    <original>F</original>
    <variation>L</variation>
    <location>
        <position position="317"/>
    </location>
</feature>
<feature type="sequence conflict" description="In Ref. 1; AAO62367." evidence="3" ref="1">
    <original>Y</original>
    <variation>N</variation>
    <location>
        <position position="320"/>
    </location>
</feature>
<feature type="sequence conflict" description="In Ref. 1; AAO62367." evidence="3" ref="1">
    <original>R</original>
    <variation>K</variation>
    <location>
        <position position="327"/>
    </location>
</feature>
<feature type="sequence conflict" description="In Ref. 1; AAO62367." evidence="3" ref="1">
    <original>E</original>
    <variation>K</variation>
    <location>
        <position position="334"/>
    </location>
</feature>
<feature type="sequence conflict" description="In Ref. 1; AAO62367." evidence="3" ref="1">
    <original>S</original>
    <variation>R</variation>
    <location>
        <position position="349"/>
    </location>
</feature>
<feature type="sequence conflict" description="In Ref. 1; AAO62367." evidence="3" ref="1">
    <original>E</original>
    <variation>K</variation>
    <location>
        <position position="353"/>
    </location>
</feature>
<feature type="sequence conflict" description="In Ref. 1; AAO62367." evidence="3" ref="1">
    <original>D</original>
    <variation>E</variation>
    <location>
        <position position="364"/>
    </location>
</feature>
<keyword id="KW-0297">G-protein coupled receptor</keyword>
<keyword id="KW-0472">Membrane</keyword>
<keyword id="KW-0675">Receptor</keyword>
<keyword id="KW-1185">Reference proteome</keyword>
<keyword id="KW-0807">Transducer</keyword>
<keyword id="KW-0812">Transmembrane</keyword>
<keyword id="KW-1133">Transmembrane helix</keyword>
<organism>
    <name type="scientific">Dictyostelium discoideum</name>
    <name type="common">Social amoeba</name>
    <dbReference type="NCBI Taxonomy" id="44689"/>
    <lineage>
        <taxon>Eukaryota</taxon>
        <taxon>Amoebozoa</taxon>
        <taxon>Evosea</taxon>
        <taxon>Eumycetozoa</taxon>
        <taxon>Dictyostelia</taxon>
        <taxon>Dictyosteliales</taxon>
        <taxon>Dictyosteliaceae</taxon>
        <taxon>Dictyostelium</taxon>
    </lineage>
</organism>
<protein>
    <recommendedName>
        <fullName>Cyclic AMP receptor-like protein A</fullName>
    </recommendedName>
</protein>
<accession>Q54U75</accession>
<accession>Q86GL6</accession>
<proteinExistence type="evidence at transcript level"/>
<name>CRLA_DICDI</name>
<sequence length="369" mass="42976">MIQILLSTFISFIIIIVSSNDIRSGENDNFNNNKMINNFLTTITTNDTIIIKETESPNDYDFSKEQIESLDKIVYFSSTMGIVGALFIIVSFFLFKAARTFATKMIFFLSLSDLFAAIFYLPYYRDSDIMCNLQGMGLVFFLSSSYLWTMCISISLFMVFFTTIFELNHWFKYFHFICWGIPLFTAIISLIFHAYGKTGSWCFISDPTSIFRLLYYLPLIVVFFINLVVFIAIRWKISQHSNSLVSRVNIIVSFYLIAFSLSQLPTIINSIQNFSDPDNPQFSLFAFQLLLQPLQGFLNCVVYGINEGFINHYVEFFEKYIFRCRCRKSRELKEIESDKTSLLVDYENSDDEEGFDGMDKLIIDDYNRV</sequence>
<reference key="1">
    <citation type="journal article" date="2004" name="Dev. Biol.">
        <title>A cAMP receptor-like G protein-coupled receptor with roles in growth regulation and development.</title>
        <authorList>
            <person name="Raisley B."/>
            <person name="Zhang M."/>
            <person name="Hereld D."/>
            <person name="Hadwiger J.A."/>
        </authorList>
    </citation>
    <scope>NUCLEOTIDE SEQUENCE [GENOMIC DNA]</scope>
    <scope>FUNCTION</scope>
    <scope>DEVELOPMENTAL STAGE</scope>
    <scope>DISRUPTION PHENOTYPE</scope>
</reference>
<reference key="2">
    <citation type="journal article" date="2005" name="Nature">
        <title>The genome of the social amoeba Dictyostelium discoideum.</title>
        <authorList>
            <person name="Eichinger L."/>
            <person name="Pachebat J.A."/>
            <person name="Gloeckner G."/>
            <person name="Rajandream M.A."/>
            <person name="Sucgang R."/>
            <person name="Berriman M."/>
            <person name="Song J."/>
            <person name="Olsen R."/>
            <person name="Szafranski K."/>
            <person name="Xu Q."/>
            <person name="Tunggal B."/>
            <person name="Kummerfeld S."/>
            <person name="Madera M."/>
            <person name="Konfortov B.A."/>
            <person name="Rivero F."/>
            <person name="Bankier A.T."/>
            <person name="Lehmann R."/>
            <person name="Hamlin N."/>
            <person name="Davies R."/>
            <person name="Gaudet P."/>
            <person name="Fey P."/>
            <person name="Pilcher K."/>
            <person name="Chen G."/>
            <person name="Saunders D."/>
            <person name="Sodergren E.J."/>
            <person name="Davis P."/>
            <person name="Kerhornou A."/>
            <person name="Nie X."/>
            <person name="Hall N."/>
            <person name="Anjard C."/>
            <person name="Hemphill L."/>
            <person name="Bason N."/>
            <person name="Farbrother P."/>
            <person name="Desany B."/>
            <person name="Just E."/>
            <person name="Morio T."/>
            <person name="Rost R."/>
            <person name="Churcher C.M."/>
            <person name="Cooper J."/>
            <person name="Haydock S."/>
            <person name="van Driessche N."/>
            <person name="Cronin A."/>
            <person name="Goodhead I."/>
            <person name="Muzny D.M."/>
            <person name="Mourier T."/>
            <person name="Pain A."/>
            <person name="Lu M."/>
            <person name="Harper D."/>
            <person name="Lindsay R."/>
            <person name="Hauser H."/>
            <person name="James K.D."/>
            <person name="Quiles M."/>
            <person name="Madan Babu M."/>
            <person name="Saito T."/>
            <person name="Buchrieser C."/>
            <person name="Wardroper A."/>
            <person name="Felder M."/>
            <person name="Thangavelu M."/>
            <person name="Johnson D."/>
            <person name="Knights A."/>
            <person name="Loulseged H."/>
            <person name="Mungall K.L."/>
            <person name="Oliver K."/>
            <person name="Price C."/>
            <person name="Quail M.A."/>
            <person name="Urushihara H."/>
            <person name="Hernandez J."/>
            <person name="Rabbinowitsch E."/>
            <person name="Steffen D."/>
            <person name="Sanders M."/>
            <person name="Ma J."/>
            <person name="Kohara Y."/>
            <person name="Sharp S."/>
            <person name="Simmonds M.N."/>
            <person name="Spiegler S."/>
            <person name="Tivey A."/>
            <person name="Sugano S."/>
            <person name="White B."/>
            <person name="Walker D."/>
            <person name="Woodward J.R."/>
            <person name="Winckler T."/>
            <person name="Tanaka Y."/>
            <person name="Shaulsky G."/>
            <person name="Schleicher M."/>
            <person name="Weinstock G.M."/>
            <person name="Rosenthal A."/>
            <person name="Cox E.C."/>
            <person name="Chisholm R.L."/>
            <person name="Gibbs R.A."/>
            <person name="Loomis W.F."/>
            <person name="Platzer M."/>
            <person name="Kay R.R."/>
            <person name="Williams J.G."/>
            <person name="Dear P.H."/>
            <person name="Noegel A.A."/>
            <person name="Barrell B.G."/>
            <person name="Kuspa A."/>
        </authorList>
    </citation>
    <scope>NUCLEOTIDE SEQUENCE [LARGE SCALE GENOMIC DNA]</scope>
    <source>
        <strain>AX4</strain>
    </source>
</reference>
<reference key="3">
    <citation type="journal article" date="2006" name="Eur. J. Cell Biol.">
        <title>The Dictyostelium repertoire of seven transmembrane domain receptors.</title>
        <authorList>
            <person name="Prabhu Y."/>
            <person name="Eichinger L."/>
        </authorList>
    </citation>
    <scope>NOMENCLATURE</scope>
</reference>
<comment type="function">
    <text evidence="2">Receptor for cAMP which may play a role in prestalk cell differentiation. May act as a negative regulator of cell growth.</text>
</comment>
<comment type="subcellular location">
    <subcellularLocation>
        <location evidence="3">Membrane</location>
        <topology evidence="3">Multi-pass membrane protein</topology>
    </subcellularLocation>
</comment>
<comment type="developmental stage">
    <text evidence="2">Expressed during vegetative growth and throughout development.</text>
</comment>
<comment type="disruption phenotype">
    <text evidence="2">Cells grow to a higher cell density than wild-type cells. They also produce large aggregates with delayed anterior tip formation indicating a role in the development of the anterior prestalk cell region.</text>
</comment>
<comment type="similarity">
    <text evidence="3">Belongs to the G-protein coupled receptor 5 family.</text>
</comment>
<dbReference type="EMBL" id="AY219179">
    <property type="protein sequence ID" value="AAO62367.1"/>
    <property type="molecule type" value="Genomic_DNA"/>
</dbReference>
<dbReference type="EMBL" id="AAFI02000040">
    <property type="protein sequence ID" value="EAL66788.1"/>
    <property type="molecule type" value="Genomic_DNA"/>
</dbReference>
<dbReference type="RefSeq" id="XP_640901.1">
    <property type="nucleotide sequence ID" value="XM_635809.1"/>
</dbReference>
<dbReference type="SMR" id="Q54U75"/>
<dbReference type="FunCoup" id="Q54U75">
    <property type="interactions" value="25"/>
</dbReference>
<dbReference type="STRING" id="44689.Q54U75"/>
<dbReference type="PaxDb" id="44689-DDB0215007"/>
<dbReference type="EnsemblProtists" id="EAL66788">
    <property type="protein sequence ID" value="EAL66788"/>
    <property type="gene ID" value="DDB_G0280983"/>
</dbReference>
<dbReference type="GeneID" id="8622960"/>
<dbReference type="KEGG" id="ddi:DDB_G0280983"/>
<dbReference type="dictyBase" id="DDB_G0280983">
    <property type="gene designation" value="crlA"/>
</dbReference>
<dbReference type="VEuPathDB" id="AmoebaDB:DDB_G0280983"/>
<dbReference type="eggNOG" id="ENOG502RSRC">
    <property type="taxonomic scope" value="Eukaryota"/>
</dbReference>
<dbReference type="HOGENOM" id="CLU_751059_0_0_1"/>
<dbReference type="InParanoid" id="Q54U75"/>
<dbReference type="OMA" id="PRICIVQ"/>
<dbReference type="PhylomeDB" id="Q54U75"/>
<dbReference type="PRO" id="PR:Q54U75"/>
<dbReference type="Proteomes" id="UP000002195">
    <property type="component" value="Chromosome 3"/>
</dbReference>
<dbReference type="GO" id="GO:0005886">
    <property type="term" value="C:plasma membrane"/>
    <property type="evidence" value="ECO:0000318"/>
    <property type="project" value="GO_Central"/>
</dbReference>
<dbReference type="GO" id="GO:0001646">
    <property type="term" value="F:cAMP receptor activity"/>
    <property type="evidence" value="ECO:0000250"/>
    <property type="project" value="dictyBase"/>
</dbReference>
<dbReference type="GO" id="GO:0004930">
    <property type="term" value="F:G protein-coupled receptor activity"/>
    <property type="evidence" value="ECO:0000318"/>
    <property type="project" value="GO_Central"/>
</dbReference>
<dbReference type="GO" id="GO:0007189">
    <property type="term" value="P:adenylate cyclase-activating G protein-coupled receptor signaling pathway"/>
    <property type="evidence" value="ECO:0000318"/>
    <property type="project" value="GO_Central"/>
</dbReference>
<dbReference type="GO" id="GO:0030308">
    <property type="term" value="P:negative regulation of cell growth"/>
    <property type="evidence" value="ECO:0000315"/>
    <property type="project" value="dictyBase"/>
</dbReference>
<dbReference type="GO" id="GO:0007165">
    <property type="term" value="P:signal transduction"/>
    <property type="evidence" value="ECO:0000315"/>
    <property type="project" value="dictyBase"/>
</dbReference>
<dbReference type="GO" id="GO:0030435">
    <property type="term" value="P:sporulation resulting in formation of a cellular spore"/>
    <property type="evidence" value="ECO:0000315"/>
    <property type="project" value="dictyBase"/>
</dbReference>
<dbReference type="CDD" id="cd14940">
    <property type="entry name" value="7tmE_cAMP_R_Slime_mold"/>
    <property type="match status" value="1"/>
</dbReference>
<dbReference type="FunFam" id="1.20.1070.10:FF:000404">
    <property type="entry name" value="Cyclic AMP receptor-like protein A"/>
    <property type="match status" value="1"/>
</dbReference>
<dbReference type="Gene3D" id="1.20.1070.10">
    <property type="entry name" value="Rhodopsin 7-helix transmembrane proteins"/>
    <property type="match status" value="1"/>
</dbReference>
<dbReference type="InterPro" id="IPR022343">
    <property type="entry name" value="GCR1-cAMP_receptor"/>
</dbReference>
<dbReference type="InterPro" id="IPR017981">
    <property type="entry name" value="GPCR_2-like_7TM"/>
</dbReference>
<dbReference type="InterPro" id="IPR022340">
    <property type="entry name" value="GPCR_GCR1_put"/>
</dbReference>
<dbReference type="PANTHER" id="PTHR23112:SF8">
    <property type="entry name" value="CYCLIC AMP RECEPTOR-LIKE PROTEIN A"/>
    <property type="match status" value="1"/>
</dbReference>
<dbReference type="PANTHER" id="PTHR23112">
    <property type="entry name" value="G PROTEIN-COUPLED RECEPTOR 157-RELATED"/>
    <property type="match status" value="1"/>
</dbReference>
<dbReference type="Pfam" id="PF05462">
    <property type="entry name" value="Dicty_CAR"/>
    <property type="match status" value="1"/>
</dbReference>
<dbReference type="PRINTS" id="PR02001">
    <property type="entry name" value="GCR1CAMPR"/>
</dbReference>
<dbReference type="PRINTS" id="PR02000">
    <property type="entry name" value="GCR1PLANT"/>
</dbReference>
<dbReference type="SUPFAM" id="SSF81321">
    <property type="entry name" value="Family A G protein-coupled receptor-like"/>
    <property type="match status" value="1"/>
</dbReference>
<dbReference type="PROSITE" id="PS50261">
    <property type="entry name" value="G_PROTEIN_RECEP_F2_4"/>
    <property type="match status" value="1"/>
</dbReference>
<gene>
    <name type="primary">crlA</name>
    <name type="ORF">DDB_G0280983</name>
</gene>
<evidence type="ECO:0000255" key="1"/>
<evidence type="ECO:0000269" key="2">
    <source>
    </source>
</evidence>
<evidence type="ECO:0000305" key="3"/>